<name>HS903_ARATH</name>
<feature type="chain" id="PRO_0000062948" description="Heat shock protein 90-3">
    <location>
        <begin position="1"/>
        <end position="699"/>
    </location>
</feature>
<feature type="region of interest" description="Disordered" evidence="4">
    <location>
        <begin position="219"/>
        <end position="248"/>
    </location>
</feature>
<feature type="region of interest" description="Disordered" evidence="4">
    <location>
        <begin position="676"/>
        <end position="699"/>
    </location>
</feature>
<feature type="short sequence motif" description="TPR repeat-binding">
    <location>
        <begin position="695"/>
        <end position="699"/>
    </location>
</feature>
<feature type="compositionally biased region" description="Acidic residues" evidence="4">
    <location>
        <begin position="219"/>
        <end position="228"/>
    </location>
</feature>
<feature type="compositionally biased region" description="Acidic residues" evidence="4">
    <location>
        <begin position="676"/>
        <end position="690"/>
    </location>
</feature>
<feature type="binding site" evidence="2">
    <location>
        <position position="34"/>
    </location>
    <ligand>
        <name>ATP</name>
        <dbReference type="ChEBI" id="CHEBI:30616"/>
    </ligand>
</feature>
<feature type="binding site" evidence="2">
    <location>
        <position position="38"/>
    </location>
    <ligand>
        <name>ATP</name>
        <dbReference type="ChEBI" id="CHEBI:30616"/>
    </ligand>
</feature>
<feature type="binding site" evidence="2">
    <location>
        <position position="80"/>
    </location>
    <ligand>
        <name>ATP</name>
        <dbReference type="ChEBI" id="CHEBI:30616"/>
    </ligand>
</feature>
<feature type="binding site" evidence="2">
    <location>
        <position position="85"/>
    </location>
    <ligand>
        <name>ATP</name>
        <dbReference type="ChEBI" id="CHEBI:30616"/>
    </ligand>
</feature>
<feature type="binding site" evidence="2">
    <location>
        <position position="93"/>
    </location>
    <ligand>
        <name>ATP</name>
        <dbReference type="ChEBI" id="CHEBI:30616"/>
    </ligand>
</feature>
<feature type="binding site" evidence="2">
    <location>
        <position position="99"/>
    </location>
    <ligand>
        <name>ATP</name>
        <dbReference type="ChEBI" id="CHEBI:30616"/>
    </ligand>
</feature>
<feature type="binding site" evidence="2">
    <location>
        <begin position="100"/>
        <end position="101"/>
    </location>
    <ligand>
        <name>ATP</name>
        <dbReference type="ChEBI" id="CHEBI:30616"/>
    </ligand>
</feature>
<feature type="binding site" evidence="2">
    <location>
        <begin position="120"/>
        <end position="125"/>
    </location>
    <ligand>
        <name>ATP</name>
        <dbReference type="ChEBI" id="CHEBI:30616"/>
    </ligand>
</feature>
<feature type="binding site" evidence="2">
    <location>
        <position position="172"/>
    </location>
    <ligand>
        <name>ATP</name>
        <dbReference type="ChEBI" id="CHEBI:30616"/>
    </ligand>
</feature>
<feature type="binding site" evidence="2">
    <location>
        <position position="371"/>
    </location>
    <ligand>
        <name>ATP</name>
        <dbReference type="ChEBI" id="CHEBI:30616"/>
    </ligand>
</feature>
<feature type="modified residue" description="Phosphoserine" evidence="3">
    <location>
        <position position="219"/>
    </location>
</feature>
<feature type="mutagenesis site" description="In muse10; enhances snc1-mediated autoimmune phenotypes." evidence="9">
    <original>S</original>
    <variation>F</variation>
    <location>
        <position position="100"/>
    </location>
</feature>
<feature type="sequence conflict" description="In Ref. 2; CAA72513." evidence="12" ref="2">
    <original>K</original>
    <variation>L</variation>
    <location>
        <position position="28"/>
    </location>
</feature>
<feature type="sequence conflict" description="In Ref. 2; CAA72513." evidence="12" ref="2">
    <original>N</original>
    <variation>K</variation>
    <location>
        <position position="92"/>
    </location>
</feature>
<feature type="sequence conflict" description="In Ref. 5; AAL49788." evidence="12" ref="5">
    <original>L</original>
    <variation>F</variation>
    <location>
        <position position="482"/>
    </location>
</feature>
<feature type="sequence conflict" description="In Ref. 2; CAA72513." evidence="12" ref="2">
    <original>E</original>
    <variation>G</variation>
    <location>
        <position position="498"/>
    </location>
</feature>
<feature type="sequence conflict" description="In Ref. 2; CAA72513." evidence="12" ref="2">
    <original>V</original>
    <variation>L</variation>
    <location>
        <position position="549"/>
    </location>
</feature>
<evidence type="ECO:0000250" key="1"/>
<evidence type="ECO:0000250" key="2">
    <source>
        <dbReference type="UniProtKB" id="P02829"/>
    </source>
</evidence>
<evidence type="ECO:0000250" key="3">
    <source>
        <dbReference type="UniProtKB" id="P27323"/>
    </source>
</evidence>
<evidence type="ECO:0000256" key="4">
    <source>
        <dbReference type="SAM" id="MobiDB-lite"/>
    </source>
</evidence>
<evidence type="ECO:0000269" key="5">
    <source>
    </source>
</evidence>
<evidence type="ECO:0000269" key="6">
    <source>
    </source>
</evidence>
<evidence type="ECO:0000269" key="7">
    <source>
    </source>
</evidence>
<evidence type="ECO:0000269" key="8">
    <source>
    </source>
</evidence>
<evidence type="ECO:0000269" key="9">
    <source>
    </source>
</evidence>
<evidence type="ECO:0000303" key="10">
    <source>
    </source>
</evidence>
<evidence type="ECO:0000303" key="11">
    <source>
    </source>
</evidence>
<evidence type="ECO:0000305" key="12"/>
<keyword id="KW-0067">ATP-binding</keyword>
<keyword id="KW-0143">Chaperone</keyword>
<keyword id="KW-0963">Cytoplasm</keyword>
<keyword id="KW-0391">Immunity</keyword>
<keyword id="KW-0399">Innate immunity</keyword>
<keyword id="KW-0547">Nucleotide-binding</keyword>
<keyword id="KW-0597">Phosphoprotein</keyword>
<keyword id="KW-0611">Plant defense</keyword>
<keyword id="KW-1185">Reference proteome</keyword>
<keyword id="KW-0346">Stress response</keyword>
<reference key="1">
    <citation type="journal article" date="1994" name="Plant Cell Physiol.">
        <title>Analysis of tissue-specific expression of Arabidopsis thaliana HSP90-family gene HSP81.</title>
        <authorList>
            <person name="Yabe N."/>
            <person name="Takahashi T."/>
            <person name="Komeda Y."/>
        </authorList>
    </citation>
    <scope>NUCLEOTIDE SEQUENCE [GENOMIC DNA]</scope>
    <source>
        <strain>cv. Columbia</strain>
    </source>
</reference>
<reference key="2">
    <citation type="journal article" date="1997" name="Plant Mol. Biol.">
        <title>Genomic organization of hsp90 gene family in Arabidopsis.</title>
        <authorList>
            <person name="Milioni D."/>
            <person name="Hatzopoulos P."/>
        </authorList>
    </citation>
    <scope>NUCLEOTIDE SEQUENCE [GENOMIC DNA]</scope>
    <source>
        <strain>cv. Landsberg erecta</strain>
    </source>
</reference>
<reference key="3">
    <citation type="journal article" date="1998" name="DNA Res.">
        <title>Structural analysis of Arabidopsis thaliana chromosome 5. V. Sequence features of the regions of 1,381,565 bp covered by twenty one physically assigned P1 and TAC clones.</title>
        <authorList>
            <person name="Kaneko T."/>
            <person name="Kotani H."/>
            <person name="Nakamura Y."/>
            <person name="Sato S."/>
            <person name="Asamizu E."/>
            <person name="Miyajima N."/>
            <person name="Tabata S."/>
        </authorList>
    </citation>
    <scope>NUCLEOTIDE SEQUENCE [LARGE SCALE GENOMIC DNA]</scope>
    <source>
        <strain>cv. Columbia</strain>
    </source>
</reference>
<reference key="4">
    <citation type="journal article" date="2017" name="Plant J.">
        <title>Araport11: a complete reannotation of the Arabidopsis thaliana reference genome.</title>
        <authorList>
            <person name="Cheng C.Y."/>
            <person name="Krishnakumar V."/>
            <person name="Chan A.P."/>
            <person name="Thibaud-Nissen F."/>
            <person name="Schobel S."/>
            <person name="Town C.D."/>
        </authorList>
    </citation>
    <scope>GENOME REANNOTATION</scope>
    <source>
        <strain>cv. Columbia</strain>
    </source>
</reference>
<reference key="5">
    <citation type="journal article" date="2003" name="Science">
        <title>Empirical analysis of transcriptional activity in the Arabidopsis genome.</title>
        <authorList>
            <person name="Yamada K."/>
            <person name="Lim J."/>
            <person name="Dale J.M."/>
            <person name="Chen H."/>
            <person name="Shinn P."/>
            <person name="Palm C.J."/>
            <person name="Southwick A.M."/>
            <person name="Wu H.C."/>
            <person name="Kim C.J."/>
            <person name="Nguyen M."/>
            <person name="Pham P.K."/>
            <person name="Cheuk R.F."/>
            <person name="Karlin-Newmann G."/>
            <person name="Liu S.X."/>
            <person name="Lam B."/>
            <person name="Sakano H."/>
            <person name="Wu T."/>
            <person name="Yu G."/>
            <person name="Miranda M."/>
            <person name="Quach H.L."/>
            <person name="Tripp M."/>
            <person name="Chang C.H."/>
            <person name="Lee J.M."/>
            <person name="Toriumi M.J."/>
            <person name="Chan M.M."/>
            <person name="Tang C.C."/>
            <person name="Onodera C.S."/>
            <person name="Deng J.M."/>
            <person name="Akiyama K."/>
            <person name="Ansari Y."/>
            <person name="Arakawa T."/>
            <person name="Banh J."/>
            <person name="Banno F."/>
            <person name="Bowser L."/>
            <person name="Brooks S.Y."/>
            <person name="Carninci P."/>
            <person name="Chao Q."/>
            <person name="Choy N."/>
            <person name="Enju A."/>
            <person name="Goldsmith A.D."/>
            <person name="Gurjal M."/>
            <person name="Hansen N.F."/>
            <person name="Hayashizaki Y."/>
            <person name="Johnson-Hopson C."/>
            <person name="Hsuan V.W."/>
            <person name="Iida K."/>
            <person name="Karnes M."/>
            <person name="Khan S."/>
            <person name="Koesema E."/>
            <person name="Ishida J."/>
            <person name="Jiang P.X."/>
            <person name="Jones T."/>
            <person name="Kawai J."/>
            <person name="Kamiya A."/>
            <person name="Meyers C."/>
            <person name="Nakajima M."/>
            <person name="Narusaka M."/>
            <person name="Seki M."/>
            <person name="Sakurai T."/>
            <person name="Satou M."/>
            <person name="Tamse R."/>
            <person name="Vaysberg M."/>
            <person name="Wallender E.K."/>
            <person name="Wong C."/>
            <person name="Yamamura Y."/>
            <person name="Yuan S."/>
            <person name="Shinozaki K."/>
            <person name="Davis R.W."/>
            <person name="Theologis A."/>
            <person name="Ecker J.R."/>
        </authorList>
    </citation>
    <scope>NUCLEOTIDE SEQUENCE [LARGE SCALE MRNA]</scope>
    <source>
        <strain>cv. Columbia</strain>
    </source>
</reference>
<reference key="6">
    <citation type="journal article" date="2001" name="Cell Stress Chaperones">
        <title>The Hsp90 family of proteins in Arabidopsis thaliana.</title>
        <authorList>
            <person name="Krishna P."/>
            <person name="Gloor G."/>
        </authorList>
    </citation>
    <scope>GENE FAMILY</scope>
    <scope>NOMENCLATURE</scope>
</reference>
<reference key="7">
    <citation type="journal article" date="2005" name="J. Exp. Bot.">
        <title>Tight regulation of expression of two Arabidopsis cytosolic Hsp90 genes during embryo development.</title>
        <authorList>
            <person name="Prasinos C."/>
            <person name="Krampis K."/>
            <person name="Samakovli D."/>
            <person name="Hatzopoulos P."/>
        </authorList>
    </citation>
    <scope>DEVELOPMENTAL STAGE</scope>
</reference>
<reference key="8">
    <citation type="journal article" date="2013" name="J. Biol. Chem.">
        <title>Quantification of interaction strengths between chaperones and tetratricopeptide repeat domain-containing membrane proteins.</title>
        <authorList>
            <person name="Schweiger R."/>
            <person name="Soll J."/>
            <person name="Jung K."/>
            <person name="Heermann R."/>
            <person name="Schwenkert S."/>
        </authorList>
    </citation>
    <scope>HOMODIMERIZATION</scope>
    <scope>INTERACTION WITH OEP61; OEP64 AND OM64</scope>
</reference>
<reference key="9">
    <citation type="journal article" date="2013" name="Plant Physiol. Biochem.">
        <title>Structural and functional differences of cytosolic 90-kDa heat-shock proteins (Hsp90s) in Arabidopsis thaliana.</title>
        <authorList>
            <person name="Cha J.Y."/>
            <person name="Ahn G."/>
            <person name="Kim J.Y."/>
            <person name="Kang S.B."/>
            <person name="Kim M.R."/>
            <person name="Su'udi M."/>
            <person name="Kim W.Y."/>
            <person name="Son D."/>
        </authorList>
    </citation>
    <scope>FUNCTION</scope>
</reference>
<reference key="10">
    <citation type="journal article" date="2014" name="New Phytol.">
        <title>Arabidopsis HSP90 protein modulates RPP4-mediated temperature-dependent cell death and defense responses.</title>
        <authorList>
            <person name="Bao F."/>
            <person name="Huang X."/>
            <person name="Zhu C."/>
            <person name="Zhang X."/>
            <person name="Li X."/>
            <person name="Yang S."/>
        </authorList>
    </citation>
    <scope>FUNCTION</scope>
</reference>
<reference key="11">
    <citation type="journal article" date="2014" name="Plant J.">
        <title>HSP90s are required for NLR immune receptor accumulation in Arabidopsis.</title>
        <authorList>
            <person name="Huang S."/>
            <person name="Monaghan J."/>
            <person name="Zhong X."/>
            <person name="Lin L."/>
            <person name="Sun T."/>
            <person name="Dong O.X."/>
            <person name="Li X."/>
        </authorList>
    </citation>
    <scope>FUNCTION</scope>
    <scope>INTERACTION WITH SNC1</scope>
    <scope>MUTAGENESIS OF SER-100</scope>
</reference>
<proteinExistence type="evidence at protein level"/>
<comment type="function">
    <text evidence="6 8 9">Functions as a holding molecular chaperone (holdase) which stabilizes unfolding protein intermediates and rapidly releases them in an active form once stress has abated. Functions as a folding molecular chaperone (foldase) that assists the non-covalent folding of proteins in an ATP-dependent manner (PubMed:23827697). Regulates RPP4-mediated temperature-dependent cell death and defense responses (PubMed:24611624). May assist SGT1B in the formation of SCF E3 ubiquitin ligase complexes that target the immune receptors SNC1, RPS2 and RPS4 for degradation, to regulate receptor levels and avoid autoimmunity (PubMed:24889324).</text>
</comment>
<comment type="subunit">
    <text evidence="7 9">Homodimer. Interacts with OEP61, OEP64 and OM64 (PubMed:24036116). Interacts with SNC1 (PubMed:24889324).</text>
</comment>
<comment type="subcellular location">
    <subcellularLocation>
        <location evidence="12">Cytoplasm</location>
    </subcellularLocation>
</comment>
<comment type="tissue specificity">
    <text>Present in all tissues. Most abundantly expressed in roots and floral bud clusters followed by flowers, young fruits and rosette leaves.</text>
</comment>
<comment type="developmental stage">
    <text evidence="5">Expressed in pollen during pollen development, germination and tube growth. Expressed during embryo development and young seedling growth.</text>
</comment>
<comment type="induction">
    <text>In contrast to other major heat shock proteins, this one is also expressed at normal growth temperatures. Levels increase only slightly after heat shock and also increase after salt treatment.</text>
</comment>
<comment type="domain">
    <text evidence="1">The TPR repeat-binding motif mediates interaction with TPR repeat-containing proteins.</text>
</comment>
<comment type="similarity">
    <text evidence="12">Belongs to the heat shock protein 90 family.</text>
</comment>
<comment type="sequence caution" evidence="12">
    <conflict type="miscellaneous discrepancy">
        <sequence resource="EMBL-CDS" id="AAB33937"/>
    </conflict>
    <text>Sequencing errors.</text>
</comment>
<organism>
    <name type="scientific">Arabidopsis thaliana</name>
    <name type="common">Mouse-ear cress</name>
    <dbReference type="NCBI Taxonomy" id="3702"/>
    <lineage>
        <taxon>Eukaryota</taxon>
        <taxon>Viridiplantae</taxon>
        <taxon>Streptophyta</taxon>
        <taxon>Embryophyta</taxon>
        <taxon>Tracheophyta</taxon>
        <taxon>Spermatophyta</taxon>
        <taxon>Magnoliopsida</taxon>
        <taxon>eudicotyledons</taxon>
        <taxon>Gunneridae</taxon>
        <taxon>Pentapetalae</taxon>
        <taxon>rosids</taxon>
        <taxon>malvids</taxon>
        <taxon>Brassicales</taxon>
        <taxon>Brassicaceae</taxon>
        <taxon>Camelineae</taxon>
        <taxon>Arabidopsis</taxon>
    </lineage>
</organism>
<gene>
    <name evidence="10" type="primary">HSP90-3</name>
    <name evidence="10" type="synonym">HSP81-3</name>
    <name type="synonym">HSP81.2</name>
    <name evidence="11" type="synonym">MUSE10</name>
    <name type="ordered locus">At5g56010</name>
    <name type="ORF">MDA7.5</name>
</gene>
<sequence>MADAETFAFQAEINQLLSLIINTFYSNKEIFLRELISNSSDALDKIRFESLTDKSKLDGQPELFIHIIPDKTNNTLTIIDSGIGMTKADLVNNLGTIARSGTKEFMEALAAGADVSMIGQFGVGFYSAYLVADKVVVTTKHNDDEQYVWESQAGGSFTVTRDTSGEALGRGTKMVLYLKEDQMEYIEERRLKDLVKKHSEFISYPISLWIEKTIEKEISDDEEEEEKKDEEGKVEEVDEEKEKEEKKKKKIKEVSHEWDLVNKQKPIWMRKPEEINKEEYAAFYKSLSNDWEEHLAVKHFSVEGQLEFKAILFVPKRAPFDLFDTKKKPNNIKLYVRRVFIMDNCEDIIPEYLGFVKGIVDSEDLPLNISRETLQQNKILKVIRKNLVKKCLELFFEIAENKEDYNKFYEAFSKNLKLGIHEDSQNRTKIAELLRYHSTKSGDELTSLKDYVTRMKEGQNDIFYITGESKKAVENSPFLEKLKKKGIEVLYMVDAIDEYAIGQLKEFEGKKLVSATKEGLKLDETEDEKKKKEELKEKFEGLCKVIKDVLGDKVEKVIVSDRVVDSPCCLVTGEYGWTANMERIMKAQALRDSSMGGYMSSKKTMEINPENSIMDELRKRADADKNDKSVKDLVLLLFETALLTSGFSLDEPNTFGSRIHRMLKLGLSIDDDDVVEADADMPPLEDDADAEGSKMEEVD</sequence>
<accession>P51818</accession>
<accession>O03985</accession>
<accession>Q8VYT8</accession>
<accession>Q94A60</accession>
<accession>Q9FKU5</accession>
<protein>
    <recommendedName>
        <fullName evidence="12">Heat shock protein 90-3</fullName>
        <shortName evidence="12">AtHSP90.3</shortName>
        <shortName evidence="10">AtHsp90-3</shortName>
    </recommendedName>
    <alternativeName>
        <fullName>HSP81.2</fullName>
    </alternativeName>
    <alternativeName>
        <fullName evidence="12">Heat shock protein 81-3</fullName>
        <shortName evidence="10">Hsp81-3</shortName>
    </alternativeName>
    <alternativeName>
        <fullName evidence="11">Protein MUTANT SNC1-ENHANCING 10</fullName>
    </alternativeName>
</protein>
<dbReference type="EMBL" id="S77849">
    <property type="protein sequence ID" value="AAB33937.1"/>
    <property type="status" value="ALT_SEQ"/>
    <property type="molecule type" value="Genomic_DNA"/>
</dbReference>
<dbReference type="EMBL" id="Y11827">
    <property type="protein sequence ID" value="CAA72513.1"/>
    <property type="molecule type" value="Genomic_DNA"/>
</dbReference>
<dbReference type="EMBL" id="AB011476">
    <property type="protein sequence ID" value="BAB09283.1"/>
    <property type="molecule type" value="Genomic_DNA"/>
</dbReference>
<dbReference type="EMBL" id="CP002688">
    <property type="protein sequence ID" value="AED96709.1"/>
    <property type="molecule type" value="Genomic_DNA"/>
</dbReference>
<dbReference type="EMBL" id="AY062832">
    <property type="protein sequence ID" value="AAL32910.1"/>
    <property type="molecule type" value="mRNA"/>
</dbReference>
<dbReference type="EMBL" id="AY081302">
    <property type="protein sequence ID" value="AAL91191.1"/>
    <property type="molecule type" value="mRNA"/>
</dbReference>
<dbReference type="EMBL" id="AY070031">
    <property type="protein sequence ID" value="AAL49788.1"/>
    <property type="molecule type" value="mRNA"/>
</dbReference>
<dbReference type="EMBL" id="AY050349">
    <property type="protein sequence ID" value="AAK91366.1"/>
    <property type="molecule type" value="mRNA"/>
</dbReference>
<dbReference type="RefSeq" id="NP_200412.1">
    <property type="nucleotide sequence ID" value="NM_124983.4"/>
</dbReference>
<dbReference type="SMR" id="P51818"/>
<dbReference type="BioGRID" id="20943">
    <property type="interactions" value="36"/>
</dbReference>
<dbReference type="FunCoup" id="P51818">
    <property type="interactions" value="2997"/>
</dbReference>
<dbReference type="STRING" id="3702.P51818"/>
<dbReference type="iPTMnet" id="P51818"/>
<dbReference type="PaxDb" id="3702-AT5G56010.1"/>
<dbReference type="ProteomicsDB" id="230249"/>
<dbReference type="EnsemblPlants" id="AT5G56010.1">
    <property type="protein sequence ID" value="AT5G56010.1"/>
    <property type="gene ID" value="AT5G56010"/>
</dbReference>
<dbReference type="GeneID" id="835699"/>
<dbReference type="Gramene" id="AT5G56010.1">
    <property type="protein sequence ID" value="AT5G56010.1"/>
    <property type="gene ID" value="AT5G56010"/>
</dbReference>
<dbReference type="KEGG" id="ath:AT5G56010"/>
<dbReference type="Araport" id="AT5G56010"/>
<dbReference type="TAIR" id="AT5G56010">
    <property type="gene designation" value="HSP81-3"/>
</dbReference>
<dbReference type="eggNOG" id="KOG0019">
    <property type="taxonomic scope" value="Eukaryota"/>
</dbReference>
<dbReference type="HOGENOM" id="CLU_006684_1_3_1"/>
<dbReference type="InParanoid" id="P51818"/>
<dbReference type="OMA" id="CERPAIS"/>
<dbReference type="OrthoDB" id="1898788at2759"/>
<dbReference type="PhylomeDB" id="P51818"/>
<dbReference type="CD-CODE" id="4299E36E">
    <property type="entry name" value="Nucleolus"/>
</dbReference>
<dbReference type="PRO" id="PR:P51818"/>
<dbReference type="Proteomes" id="UP000006548">
    <property type="component" value="Chromosome 5"/>
</dbReference>
<dbReference type="ExpressionAtlas" id="P51818">
    <property type="expression patterns" value="baseline and differential"/>
</dbReference>
<dbReference type="GO" id="GO:0005829">
    <property type="term" value="C:cytosol"/>
    <property type="evidence" value="ECO:0000304"/>
    <property type="project" value="TAIR"/>
</dbReference>
<dbReference type="GO" id="GO:0005794">
    <property type="term" value="C:Golgi apparatus"/>
    <property type="evidence" value="ECO:0007005"/>
    <property type="project" value="TAIR"/>
</dbReference>
<dbReference type="GO" id="GO:0005730">
    <property type="term" value="C:nucleolus"/>
    <property type="evidence" value="ECO:0007005"/>
    <property type="project" value="TAIR"/>
</dbReference>
<dbReference type="GO" id="GO:0005886">
    <property type="term" value="C:plasma membrane"/>
    <property type="evidence" value="ECO:0007005"/>
    <property type="project" value="TAIR"/>
</dbReference>
<dbReference type="GO" id="GO:0009536">
    <property type="term" value="C:plastid"/>
    <property type="evidence" value="ECO:0007005"/>
    <property type="project" value="TAIR"/>
</dbReference>
<dbReference type="GO" id="GO:0099503">
    <property type="term" value="C:secretory vesicle"/>
    <property type="evidence" value="ECO:0007005"/>
    <property type="project" value="TAIR"/>
</dbReference>
<dbReference type="GO" id="GO:0005524">
    <property type="term" value="F:ATP binding"/>
    <property type="evidence" value="ECO:0007669"/>
    <property type="project" value="UniProtKB-KW"/>
</dbReference>
<dbReference type="GO" id="GO:0016887">
    <property type="term" value="F:ATP hydrolysis activity"/>
    <property type="evidence" value="ECO:0007669"/>
    <property type="project" value="InterPro"/>
</dbReference>
<dbReference type="GO" id="GO:0140662">
    <property type="term" value="F:ATP-dependent protein folding chaperone"/>
    <property type="evidence" value="ECO:0007669"/>
    <property type="project" value="InterPro"/>
</dbReference>
<dbReference type="GO" id="GO:0003729">
    <property type="term" value="F:mRNA binding"/>
    <property type="evidence" value="ECO:0000314"/>
    <property type="project" value="TAIR"/>
</dbReference>
<dbReference type="GO" id="GO:0051082">
    <property type="term" value="F:unfolded protein binding"/>
    <property type="evidence" value="ECO:0007669"/>
    <property type="project" value="InterPro"/>
</dbReference>
<dbReference type="GO" id="GO:0071277">
    <property type="term" value="P:cellular response to calcium ion"/>
    <property type="evidence" value="ECO:0000315"/>
    <property type="project" value="TAIR"/>
</dbReference>
<dbReference type="GO" id="GO:0051131">
    <property type="term" value="P:chaperone-mediated protein complex assembly"/>
    <property type="evidence" value="ECO:0000315"/>
    <property type="project" value="TAIR"/>
</dbReference>
<dbReference type="GO" id="GO:0045087">
    <property type="term" value="P:innate immune response"/>
    <property type="evidence" value="ECO:0007669"/>
    <property type="project" value="UniProtKB-KW"/>
</dbReference>
<dbReference type="GO" id="GO:0009408">
    <property type="term" value="P:response to heat"/>
    <property type="evidence" value="ECO:0000315"/>
    <property type="project" value="TAIR"/>
</dbReference>
<dbReference type="CDD" id="cd16927">
    <property type="entry name" value="HATPase_Hsp90-like"/>
    <property type="match status" value="1"/>
</dbReference>
<dbReference type="FunFam" id="3.30.565.10:FF:000012">
    <property type="entry name" value="Heat shock cognate protein"/>
    <property type="match status" value="1"/>
</dbReference>
<dbReference type="FunFam" id="1.20.120.790:FF:000001">
    <property type="entry name" value="Heat shock protein 90 alpha"/>
    <property type="match status" value="1"/>
</dbReference>
<dbReference type="FunFam" id="3.30.230.80:FF:000001">
    <property type="entry name" value="Heat shock protein 90 alpha"/>
    <property type="match status" value="1"/>
</dbReference>
<dbReference type="FunFam" id="3.40.50.11260:FF:000001">
    <property type="entry name" value="Heat shock protein 90 alpha"/>
    <property type="match status" value="1"/>
</dbReference>
<dbReference type="Gene3D" id="3.30.230.80">
    <property type="match status" value="1"/>
</dbReference>
<dbReference type="Gene3D" id="3.40.50.11260">
    <property type="match status" value="1"/>
</dbReference>
<dbReference type="Gene3D" id="1.20.120.790">
    <property type="entry name" value="Heat shock protein 90, C-terminal domain"/>
    <property type="match status" value="1"/>
</dbReference>
<dbReference type="Gene3D" id="3.30.565.10">
    <property type="entry name" value="Histidine kinase-like ATPase, C-terminal domain"/>
    <property type="match status" value="1"/>
</dbReference>
<dbReference type="HAMAP" id="MF_00505">
    <property type="entry name" value="HSP90"/>
    <property type="match status" value="1"/>
</dbReference>
<dbReference type="InterPro" id="IPR036890">
    <property type="entry name" value="HATPase_C_sf"/>
</dbReference>
<dbReference type="InterPro" id="IPR019805">
    <property type="entry name" value="Heat_shock_protein_90_CS"/>
</dbReference>
<dbReference type="InterPro" id="IPR037196">
    <property type="entry name" value="HSP90_C"/>
</dbReference>
<dbReference type="InterPro" id="IPR001404">
    <property type="entry name" value="Hsp90_fam"/>
</dbReference>
<dbReference type="InterPro" id="IPR020575">
    <property type="entry name" value="Hsp90_N"/>
</dbReference>
<dbReference type="InterPro" id="IPR020568">
    <property type="entry name" value="Ribosomal_Su5_D2-typ_SF"/>
</dbReference>
<dbReference type="NCBIfam" id="NF003555">
    <property type="entry name" value="PRK05218.1"/>
    <property type="match status" value="1"/>
</dbReference>
<dbReference type="PANTHER" id="PTHR11528">
    <property type="entry name" value="HEAT SHOCK PROTEIN 90 FAMILY MEMBER"/>
    <property type="match status" value="1"/>
</dbReference>
<dbReference type="Pfam" id="PF13589">
    <property type="entry name" value="HATPase_c_3"/>
    <property type="match status" value="1"/>
</dbReference>
<dbReference type="Pfam" id="PF00183">
    <property type="entry name" value="HSP90"/>
    <property type="match status" value="1"/>
</dbReference>
<dbReference type="PIRSF" id="PIRSF002583">
    <property type="entry name" value="Hsp90"/>
    <property type="match status" value="1"/>
</dbReference>
<dbReference type="PRINTS" id="PR00775">
    <property type="entry name" value="HEATSHOCK90"/>
</dbReference>
<dbReference type="SMART" id="SM00387">
    <property type="entry name" value="HATPase_c"/>
    <property type="match status" value="1"/>
</dbReference>
<dbReference type="SUPFAM" id="SSF55874">
    <property type="entry name" value="ATPase domain of HSP90 chaperone/DNA topoisomerase II/histidine kinase"/>
    <property type="match status" value="1"/>
</dbReference>
<dbReference type="SUPFAM" id="SSF110942">
    <property type="entry name" value="HSP90 C-terminal domain"/>
    <property type="match status" value="1"/>
</dbReference>
<dbReference type="SUPFAM" id="SSF54211">
    <property type="entry name" value="Ribosomal protein S5 domain 2-like"/>
    <property type="match status" value="1"/>
</dbReference>
<dbReference type="PROSITE" id="PS00298">
    <property type="entry name" value="HSP90"/>
    <property type="match status" value="1"/>
</dbReference>